<accession>P0DQJ9</accession>
<reference key="1">
    <citation type="journal article" date="2004" name="Comp. Biochem. Physiol.">
        <title>Purification and characterization of antimicrobial peptides from the skin secretions of the mink frog (Rana septentrionalis).</title>
        <authorList>
            <person name="Bevier C.R."/>
            <person name="Sonnevend A."/>
            <person name="Kolodziejek J."/>
            <person name="Nowotny N."/>
            <person name="Nielsen P.F."/>
            <person name="Conlon J.M."/>
        </authorList>
    </citation>
    <scope>PROTEIN SEQUENCE</scope>
    <scope>SUBCELLULAR LOCATION</scope>
    <scope>MASS SPECTROMETRY</scope>
    <scope>DEVELOPMENTAL STAGE</scope>
    <scope>DISULFIDE BOND</scope>
    <source>
        <tissue>Skin secretion</tissue>
    </source>
</reference>
<dbReference type="GO" id="GO:0005576">
    <property type="term" value="C:extracellular region"/>
    <property type="evidence" value="ECO:0007669"/>
    <property type="project" value="UniProtKB-SubCell"/>
</dbReference>
<dbReference type="GO" id="GO:0042742">
    <property type="term" value="P:defense response to bacterium"/>
    <property type="evidence" value="ECO:0007669"/>
    <property type="project" value="UniProtKB-KW"/>
</dbReference>
<dbReference type="GO" id="GO:0050832">
    <property type="term" value="P:defense response to fungus"/>
    <property type="evidence" value="ECO:0007669"/>
    <property type="project" value="UniProtKB-KW"/>
</dbReference>
<dbReference type="GO" id="GO:0031640">
    <property type="term" value="P:killing of cells of another organism"/>
    <property type="evidence" value="ECO:0007669"/>
    <property type="project" value="UniProtKB-KW"/>
</dbReference>
<dbReference type="InterPro" id="IPR012520">
    <property type="entry name" value="Antimicrobial_frog_1"/>
</dbReference>
<dbReference type="Pfam" id="PF08018">
    <property type="entry name" value="Antimicrobial_1"/>
    <property type="match status" value="1"/>
</dbReference>
<name>BR1A_LITST</name>
<protein>
    <recommendedName>
        <fullName evidence="2">Brevinin-1SPa</fullName>
    </recommendedName>
</protein>
<proteinExistence type="evidence at protein level"/>
<comment type="function">
    <text evidence="1">Antimicrobial peptide with activity against Gram-negative and Gram-positive bacteria (MIC=13 uM against E.coli, MIC=3 uM against S.aureus) and fungi (MIC=6 uM against C.albicans) (PubMed:15556063). Shows hemolytic activity on human erythrocytes (HC(50)=7 uM) (PubMed:15556063).</text>
</comment>
<comment type="subcellular location">
    <subcellularLocation>
        <location evidence="1">Secreted</location>
    </subcellularLocation>
</comment>
<comment type="tissue specificity">
    <text evidence="4">Expressed by the skin glands.</text>
</comment>
<comment type="developmental stage">
    <text evidence="4">Is equally expressed in juvenile and adult (male and female) frogs.</text>
</comment>
<comment type="mass spectrometry"/>
<comment type="similarity">
    <text evidence="3">Belongs to the frog skin active peptide (FSAP) family. Brevinin subfamily.</text>
</comment>
<comment type="online information" name="The antimicrobial peptide database">
    <link uri="https://wangapd3.com/database/query_output.php?ID=01438"/>
</comment>
<organism>
    <name type="scientific">Lithobates septentrionalis</name>
    <name type="common">Mink frog</name>
    <name type="synonym">Rana septentrionalis</name>
    <dbReference type="NCBI Taxonomy" id="190274"/>
    <lineage>
        <taxon>Eukaryota</taxon>
        <taxon>Metazoa</taxon>
        <taxon>Chordata</taxon>
        <taxon>Craniata</taxon>
        <taxon>Vertebrata</taxon>
        <taxon>Euteleostomi</taxon>
        <taxon>Amphibia</taxon>
        <taxon>Batrachia</taxon>
        <taxon>Anura</taxon>
        <taxon>Neobatrachia</taxon>
        <taxon>Ranoidea</taxon>
        <taxon>Ranidae</taxon>
        <taxon>Lithobates</taxon>
    </lineage>
</organism>
<sequence>FFPIIAGMAAKLIPSLFCKITKKC</sequence>
<evidence type="ECO:0000269" key="1">
    <source>
    </source>
</evidence>
<evidence type="ECO:0000303" key="2">
    <source>
    </source>
</evidence>
<evidence type="ECO:0000305" key="3"/>
<evidence type="ECO:0000305" key="4">
    <source>
    </source>
</evidence>
<keyword id="KW-0878">Amphibian defense peptide</keyword>
<keyword id="KW-0044">Antibiotic</keyword>
<keyword id="KW-0929">Antimicrobial</keyword>
<keyword id="KW-0204">Cytolysis</keyword>
<keyword id="KW-0903">Direct protein sequencing</keyword>
<keyword id="KW-1015">Disulfide bond</keyword>
<keyword id="KW-0295">Fungicide</keyword>
<keyword id="KW-0354">Hemolysis</keyword>
<keyword id="KW-0964">Secreted</keyword>
<feature type="peptide" id="PRO_0000449476" description="Brevinin-1SPa" evidence="1">
    <location>
        <begin position="1"/>
        <end position="24"/>
    </location>
</feature>
<feature type="disulfide bond" evidence="1">
    <location>
        <begin position="18"/>
        <end position="24"/>
    </location>
</feature>